<feature type="chain" id="PRO_0000118245" description="NADH-ubiquinone oxidoreductase chain 6">
    <location>
        <begin position="1"/>
        <end position="162"/>
    </location>
</feature>
<feature type="transmembrane region" description="Helical" evidence="2">
    <location>
        <begin position="1"/>
        <end position="21"/>
    </location>
</feature>
<feature type="transmembrane region" description="Helical" evidence="2">
    <location>
        <begin position="46"/>
        <end position="66"/>
    </location>
</feature>
<feature type="transmembrane region" description="Helical" evidence="2">
    <location>
        <begin position="84"/>
        <end position="104"/>
    </location>
</feature>
<feature type="transmembrane region" description="Helical" evidence="2">
    <location>
        <begin position="130"/>
        <end position="150"/>
    </location>
</feature>
<organism>
    <name type="scientific">Patiria pectinifera</name>
    <name type="common">Starfish</name>
    <name type="synonym">Asterina pectinifera</name>
    <dbReference type="NCBI Taxonomy" id="7594"/>
    <lineage>
        <taxon>Eukaryota</taxon>
        <taxon>Metazoa</taxon>
        <taxon>Echinodermata</taxon>
        <taxon>Eleutherozoa</taxon>
        <taxon>Asterozoa</taxon>
        <taxon>Asteroidea</taxon>
        <taxon>Valvatacea</taxon>
        <taxon>Valvatida</taxon>
        <taxon>Asterinidae</taxon>
        <taxon>Patiria</taxon>
    </lineage>
</organism>
<gene>
    <name type="primary">ND6</name>
</gene>
<comment type="function">
    <text evidence="1">Core subunit of the mitochondrial membrane respiratory chain NADH dehydrogenase (Complex I) that is believed to belong to the minimal assembly required for catalysis. Complex I functions in the transfer of electrons from NADH to the respiratory chain. The immediate electron acceptor for the enzyme is believed to be ubiquinone (By similarity).</text>
</comment>
<comment type="catalytic activity">
    <reaction>
        <text>a ubiquinone + NADH + 5 H(+)(in) = a ubiquinol + NAD(+) + 4 H(+)(out)</text>
        <dbReference type="Rhea" id="RHEA:29091"/>
        <dbReference type="Rhea" id="RHEA-COMP:9565"/>
        <dbReference type="Rhea" id="RHEA-COMP:9566"/>
        <dbReference type="ChEBI" id="CHEBI:15378"/>
        <dbReference type="ChEBI" id="CHEBI:16389"/>
        <dbReference type="ChEBI" id="CHEBI:17976"/>
        <dbReference type="ChEBI" id="CHEBI:57540"/>
        <dbReference type="ChEBI" id="CHEBI:57945"/>
        <dbReference type="EC" id="7.1.1.2"/>
    </reaction>
</comment>
<comment type="subcellular location">
    <subcellularLocation>
        <location evidence="3">Mitochondrion membrane</location>
        <topology evidence="3">Multi-pass membrane protein</topology>
    </subcellularLocation>
</comment>
<comment type="similarity">
    <text evidence="3">Belongs to the complex I subunit 6 family.</text>
</comment>
<protein>
    <recommendedName>
        <fullName>NADH-ubiquinone oxidoreductase chain 6</fullName>
        <ecNumber>7.1.1.2</ecNumber>
    </recommendedName>
    <alternativeName>
        <fullName>NADH dehydrogenase subunit 6</fullName>
    </alternativeName>
</protein>
<geneLocation type="mitochondrion"/>
<evidence type="ECO:0000250" key="1"/>
<evidence type="ECO:0000255" key="2"/>
<evidence type="ECO:0000305" key="3"/>
<proteinExistence type="inferred from homology"/>
<reference key="1">
    <citation type="journal article" date="1995" name="Genetics">
        <title>Nucleotide sequence and gene organization of the starfish Asterina pectinifera mitochondrial genome.</title>
        <authorList>
            <person name="Asakawa S."/>
            <person name="Himeno H."/>
            <person name="Miura K."/>
            <person name="Watanabe K."/>
        </authorList>
    </citation>
    <scope>NUCLEOTIDE SEQUENCE [GENOMIC DNA]</scope>
    <source>
        <tissue>Ovary</tissue>
    </source>
</reference>
<keyword id="KW-0249">Electron transport</keyword>
<keyword id="KW-0472">Membrane</keyword>
<keyword id="KW-0496">Mitochondrion</keyword>
<keyword id="KW-0520">NAD</keyword>
<keyword id="KW-0679">Respiratory chain</keyword>
<keyword id="KW-1278">Translocase</keyword>
<keyword id="KW-0812">Transmembrane</keyword>
<keyword id="KW-1133">Transmembrane helix</keyword>
<keyword id="KW-0813">Transport</keyword>
<keyword id="KW-0830">Ubiquinone</keyword>
<accession>Q33817</accession>
<dbReference type="EC" id="7.1.1.2"/>
<dbReference type="EMBL" id="D16387">
    <property type="protein sequence ID" value="BAA03876.1"/>
    <property type="molecule type" value="Genomic_DNA"/>
</dbReference>
<dbReference type="PIR" id="S70593">
    <property type="entry name" value="S70593"/>
</dbReference>
<dbReference type="RefSeq" id="NP_008164.1">
    <property type="nucleotide sequence ID" value="NC_001627.1"/>
</dbReference>
<dbReference type="SMR" id="Q33817"/>
<dbReference type="GeneID" id="807827"/>
<dbReference type="CTD" id="4541"/>
<dbReference type="GO" id="GO:0031966">
    <property type="term" value="C:mitochondrial membrane"/>
    <property type="evidence" value="ECO:0007669"/>
    <property type="project" value="UniProtKB-SubCell"/>
</dbReference>
<dbReference type="GO" id="GO:0008137">
    <property type="term" value="F:NADH dehydrogenase (ubiquinone) activity"/>
    <property type="evidence" value="ECO:0007669"/>
    <property type="project" value="UniProtKB-EC"/>
</dbReference>
<dbReference type="Gene3D" id="1.20.120.1200">
    <property type="entry name" value="NADH-ubiquinone/plastoquinone oxidoreductase chain 6, subunit NuoJ"/>
    <property type="match status" value="1"/>
</dbReference>
<dbReference type="InterPro" id="IPR050269">
    <property type="entry name" value="ComplexI_Subunit6"/>
</dbReference>
<dbReference type="InterPro" id="IPR001457">
    <property type="entry name" value="NADH_UbQ/plastoQ_OxRdtase_su6"/>
</dbReference>
<dbReference type="InterPro" id="IPR042106">
    <property type="entry name" value="Nuo/plastoQ_OxRdtase_6_NuoJ"/>
</dbReference>
<dbReference type="PANTHER" id="PTHR11435">
    <property type="entry name" value="NADH UBIQUINONE OXIDOREDUCTASE SUBUNIT ND6"/>
    <property type="match status" value="1"/>
</dbReference>
<dbReference type="PANTHER" id="PTHR11435:SF1">
    <property type="entry name" value="NADH-UBIQUINONE OXIDOREDUCTASE CHAIN 6"/>
    <property type="match status" value="1"/>
</dbReference>
<dbReference type="Pfam" id="PF00499">
    <property type="entry name" value="Oxidored_q3"/>
    <property type="match status" value="1"/>
</dbReference>
<sequence>MIFYTVLVLMFLGSTLVFYSLSPYYGALGLVLVALSGCLLCSLLGFSFIALVLILIYVGGMLVVFVYSTAISAERYPSVSNFNEILVLSSLVISWGVLNFDPLINVEVNSWGFVTNSDLVGASNLYSSMGGYLLIGGYILLVALVVALVLTYGSDYSILKAL</sequence>
<name>NU6M_PATPE</name>